<keyword id="KW-0472">Membrane</keyword>
<keyword id="KW-1185">Reference proteome</keyword>
<keyword id="KW-0812">Transmembrane</keyword>
<keyword id="KW-1133">Transmembrane helix</keyword>
<name>COS3_YEAST</name>
<organism>
    <name type="scientific">Saccharomyces cerevisiae (strain ATCC 204508 / S288c)</name>
    <name type="common">Baker's yeast</name>
    <dbReference type="NCBI Taxonomy" id="559292"/>
    <lineage>
        <taxon>Eukaryota</taxon>
        <taxon>Fungi</taxon>
        <taxon>Dikarya</taxon>
        <taxon>Ascomycota</taxon>
        <taxon>Saccharomycotina</taxon>
        <taxon>Saccharomycetes</taxon>
        <taxon>Saccharomycetales</taxon>
        <taxon>Saccharomycetaceae</taxon>
        <taxon>Saccharomyces</taxon>
    </lineage>
</organism>
<comment type="subcellular location">
    <subcellularLocation>
        <location>Membrane</location>
        <topology>Multi-pass membrane protein</topology>
    </subcellularLocation>
</comment>
<comment type="similarity">
    <text evidence="2">Belongs to the DUP/COS family.</text>
</comment>
<dbReference type="EMBL" id="Z50178">
    <property type="protein sequence ID" value="CAA90551.1"/>
    <property type="molecule type" value="Genomic_DNA"/>
</dbReference>
<dbReference type="EMBL" id="BK006946">
    <property type="protein sequence ID" value="DAA09767.1"/>
    <property type="molecule type" value="Genomic_DNA"/>
</dbReference>
<dbReference type="PIR" id="S46187">
    <property type="entry name" value="S46187"/>
</dbReference>
<dbReference type="RefSeq" id="NP_013574.1">
    <property type="nucleotide sequence ID" value="NM_001182495.1"/>
</dbReference>
<dbReference type="BioGRID" id="32994">
    <property type="interactions" value="2"/>
</dbReference>
<dbReference type="BioGRID" id="35073">
    <property type="interactions" value="12"/>
</dbReference>
<dbReference type="FunCoup" id="P0CX13">
    <property type="interactions" value="62"/>
</dbReference>
<dbReference type="iPTMnet" id="P0CX13"/>
<dbReference type="EnsemblFungi" id="YBR302C_mRNA">
    <property type="protein sequence ID" value="YBR302C"/>
    <property type="gene ID" value="YBR302C"/>
</dbReference>
<dbReference type="EnsemblFungi" id="YML132W_mRNA">
    <property type="protein sequence ID" value="YML132W"/>
    <property type="gene ID" value="YML132W"/>
</dbReference>
<dbReference type="GeneID" id="854907"/>
<dbReference type="KEGG" id="sce:YBR302C"/>
<dbReference type="KEGG" id="sce:YML132W"/>
<dbReference type="AGR" id="SGD:S000004601"/>
<dbReference type="SGD" id="S000004601">
    <property type="gene designation" value="COS3"/>
</dbReference>
<dbReference type="VEuPathDB" id="FungiDB:YBR302C"/>
<dbReference type="VEuPathDB" id="FungiDB:YML132W"/>
<dbReference type="GeneTree" id="ENSGT00940000176283"/>
<dbReference type="HOGENOM" id="CLU_062892_1_0_1"/>
<dbReference type="InParanoid" id="P0CX13"/>
<dbReference type="OMA" id="CVITWVA"/>
<dbReference type="OrthoDB" id="4039705at2759"/>
<dbReference type="BioCyc" id="YEAST:G3O-32710-MONOMER"/>
<dbReference type="PRO" id="PR:P0CX13"/>
<dbReference type="Proteomes" id="UP000002311">
    <property type="component" value="Chromosome XIII"/>
</dbReference>
<dbReference type="RNAct" id="P0CX13">
    <property type="molecule type" value="protein"/>
</dbReference>
<dbReference type="ExpressionAtlas" id="P0CX13">
    <property type="expression patterns" value="baseline and differential"/>
</dbReference>
<dbReference type="GO" id="GO:0005768">
    <property type="term" value="C:endosome"/>
    <property type="evidence" value="ECO:0000314"/>
    <property type="project" value="SGD"/>
</dbReference>
<dbReference type="GO" id="GO:0000324">
    <property type="term" value="C:fungal-type vacuole"/>
    <property type="evidence" value="ECO:0000314"/>
    <property type="project" value="SGD"/>
</dbReference>
<dbReference type="GO" id="GO:0005886">
    <property type="term" value="C:plasma membrane"/>
    <property type="evidence" value="ECO:0000314"/>
    <property type="project" value="SGD"/>
</dbReference>
<dbReference type="GO" id="GO:0006883">
    <property type="term" value="P:intracellular sodium ion homeostasis"/>
    <property type="evidence" value="ECO:0000315"/>
    <property type="project" value="SGD"/>
</dbReference>
<dbReference type="GO" id="GO:0043328">
    <property type="term" value="P:protein transport to vacuole involved in ubiquitin-dependent protein catabolic process via the multivesicular body sorting pathway"/>
    <property type="evidence" value="ECO:0000250"/>
    <property type="project" value="SGD"/>
</dbReference>
<dbReference type="InterPro" id="IPR001142">
    <property type="entry name" value="DUP/COS"/>
</dbReference>
<dbReference type="Pfam" id="PF00674">
    <property type="entry name" value="DUP"/>
    <property type="match status" value="2"/>
</dbReference>
<protein>
    <recommendedName>
        <fullName>Protein COS3</fullName>
    </recommendedName>
</protein>
<evidence type="ECO:0000255" key="1"/>
<evidence type="ECO:0000305" key="2"/>
<reference key="1">
    <citation type="journal article" date="1997" name="Nature">
        <title>The nucleotide sequence of Saccharomyces cerevisiae chromosome XIII.</title>
        <authorList>
            <person name="Bowman S."/>
            <person name="Churcher C.M."/>
            <person name="Badcock K."/>
            <person name="Brown D."/>
            <person name="Chillingworth T."/>
            <person name="Connor R."/>
            <person name="Dedman K."/>
            <person name="Devlin K."/>
            <person name="Gentles S."/>
            <person name="Hamlin N."/>
            <person name="Hunt S."/>
            <person name="Jagels K."/>
            <person name="Lye G."/>
            <person name="Moule S."/>
            <person name="Odell C."/>
            <person name="Pearson D."/>
            <person name="Rajandream M.A."/>
            <person name="Rice P."/>
            <person name="Skelton J."/>
            <person name="Walsh S.V."/>
            <person name="Whitehead S."/>
            <person name="Barrell B.G."/>
        </authorList>
    </citation>
    <scope>NUCLEOTIDE SEQUENCE [LARGE SCALE GENOMIC DNA]</scope>
    <source>
        <strain>ATCC 204508 / S288c</strain>
    </source>
</reference>
<reference key="2">
    <citation type="journal article" date="2014" name="G3 (Bethesda)">
        <title>The reference genome sequence of Saccharomyces cerevisiae: Then and now.</title>
        <authorList>
            <person name="Engel S.R."/>
            <person name="Dietrich F.S."/>
            <person name="Fisk D.G."/>
            <person name="Binkley G."/>
            <person name="Balakrishnan R."/>
            <person name="Costanzo M.C."/>
            <person name="Dwight S.S."/>
            <person name="Hitz B.C."/>
            <person name="Karra K."/>
            <person name="Nash R.S."/>
            <person name="Weng S."/>
            <person name="Wong E.D."/>
            <person name="Lloyd P."/>
            <person name="Skrzypek M.S."/>
            <person name="Miyasato S.R."/>
            <person name="Simison M."/>
            <person name="Cherry J.M."/>
        </authorList>
    </citation>
    <scope>GENOME REANNOTATION</scope>
    <source>
        <strain>ATCC 204508 / S288c</strain>
    </source>
</reference>
<reference key="3">
    <citation type="journal article" date="2006" name="Proc. Natl. Acad. Sci. U.S.A.">
        <title>A global topology map of the Saccharomyces cerevisiae membrane proteome.</title>
        <authorList>
            <person name="Kim H."/>
            <person name="Melen K."/>
            <person name="Oesterberg M."/>
            <person name="von Heijne G."/>
        </authorList>
    </citation>
    <scope>TOPOLOGY [LARGE SCALE ANALYSIS]</scope>
    <source>
        <strain>ATCC 208353 / W303-1A</strain>
    </source>
</reference>
<sequence>MKENELKNEKSVDVLSFKQLESQKIVLPQDLFRSSFTWFCYEIYKSLAFRIWMLLWLPLSVWWKLSNNCIYPLIVSLLVLFLGPIFVLVICGLSRKRSLSKQLIQFCKEITENTPSSDPHDWEVVAANLNSYLYENNVWNTKYFFFNAMVCQEAFRTTLLEPFSLKKDKAAKVKSFKDSVPYIEEALGVYFTEVEKQWKLFNTEKSWSPVGLEDAKLPKEAYRFKLTWFLKRISNIFMLIPFLNFLCCIYVSRGMCLLLRTLYLGWILFMLVQGFQNIRVLIMSMEHKMQFLSTIINEQESGANGWDEIARKMNRYLFEKKAWKNEEFFFDGIDCEWFFNHFFYRVLSAKKSMWPLPLNVELWPYIKEAQLSRSEVLLV</sequence>
<gene>
    <name type="primary">COS3</name>
    <name type="ordered locus">YML132W</name>
    <name type="ORF">YM4987.03</name>
</gene>
<accession>P0CX13</accession>
<accession>D6VQU7</accession>
<accession>P38363</accession>
<proteinExistence type="evidence at protein level"/>
<feature type="chain" id="PRO_0000409750" description="Protein COS3">
    <location>
        <begin position="1"/>
        <end position="379"/>
    </location>
</feature>
<feature type="topological domain" description="Cytoplasmic" evidence="1">
    <location>
        <begin position="1"/>
        <end position="72"/>
    </location>
</feature>
<feature type="transmembrane region" description="Helical" evidence="1">
    <location>
        <begin position="73"/>
        <end position="93"/>
    </location>
</feature>
<feature type="topological domain" description="Extracellular" evidence="1">
    <location>
        <begin position="94"/>
        <end position="254"/>
    </location>
</feature>
<feature type="transmembrane region" description="Helical" evidence="1">
    <location>
        <begin position="255"/>
        <end position="275"/>
    </location>
</feature>
<feature type="topological domain" description="Cytoplasmic" evidence="1">
    <location>
        <begin position="276"/>
        <end position="379"/>
    </location>
</feature>